<protein>
    <recommendedName>
        <fullName>G patch domain-containing protein 1</fullName>
    </recommendedName>
</protein>
<comment type="similarity">
    <text evidence="4">Belongs to the GPATCH1 family.</text>
</comment>
<evidence type="ECO:0000250" key="1">
    <source>
        <dbReference type="UniProtKB" id="Q9BRR8"/>
    </source>
</evidence>
<evidence type="ECO:0000255" key="2">
    <source>
        <dbReference type="PROSITE-ProRule" id="PRU00092"/>
    </source>
</evidence>
<evidence type="ECO:0000256" key="3">
    <source>
        <dbReference type="SAM" id="MobiDB-lite"/>
    </source>
</evidence>
<evidence type="ECO:0000305" key="4"/>
<name>GPTC1_BOVIN</name>
<sequence length="931" mass="103602">MAALDSDSDEDLVSYGTGLEPLEEGERPKKPIPLQDQTVRDEKGRYKRFHGAFSGGFSAGYFNTVGSKEGWTPSSFVSSRQNRADKSVLGPEDFMDEEDLSEFGIAPKSIVTTDDFASKTKDRIREKARQLAAATAPIPGATLLDDLITPAKLSVGFELLRKMGWKEGQGIGPRVKRRPRRQKPDPGVKIYGCALPPGGSEGSEDEDDDYLPENVTFAPKDVTPVDFTPKDNVHGLAYKGLDPHQALFGTSGEHFNLFSGGPEETGDLLGDIGVNKGRKLGISGQAFGVGALEEEDDDIYATETLSKYDTVLKDEEPGDGLYGWTAPRQYKSQKESEKDLCYVGKILDGFSLASKPLSSKKIYPPPELPRDYRPVHYFRPVVAATSENSHLLQVLSESAGKPTNDPGTRSRHQLNACKRGELLGETPIQGAPTSVLEFLSQKDKERLKEVKQATDLKAAQLRARSLAQSASGSRPQPLSPDVGHCSWHMALSGGMASTRTSNFKPFAKDPEKQKRYEEFLANMKRGQKDALERCLDPGMTEWERGRERDEFARAALLYASSHSTLSSRFTHAQEEDDSEQVEVPRDQENDVSDKQSAVKMKMFGKLTRDTFEWHPDKLLCKRFNVPDPYPDSTLVGLPRVKRDKYSVFNFLTIPETASSPVTQASSEKVAQHRASDKSRKPSRWDTSKEEKKEDSISEFLSLARSKVGPAKPEPSPLVNKEEARATESVSNKVVNKDVDSQTEGEGSRPSMDLFKAIFASSSDEKSSSSEDEQGDSEDDQEGTREADFKSSQETDLVEASSVAQASEPAPQEPAPFFPIQKMQIDEREAFGPRLPPVFCPNARQKLEAPLKEKHKKNKEKHKTKKEHRRKKEKKKKHRKHKHKGKQKNKKSEKSSSSESTDSSDSQSEEGPTDLSPQELLRRLKRLPLRRQ</sequence>
<dbReference type="EMBL" id="BC114043">
    <property type="protein sequence ID" value="AAI14044.1"/>
    <property type="molecule type" value="mRNA"/>
</dbReference>
<dbReference type="EMBL" id="BT026213">
    <property type="protein sequence ID" value="ABG67052.1"/>
    <property type="molecule type" value="mRNA"/>
</dbReference>
<dbReference type="RefSeq" id="NP_001069246.1">
    <property type="nucleotide sequence ID" value="NM_001075778.1"/>
</dbReference>
<dbReference type="FunCoup" id="Q24K12">
    <property type="interactions" value="4281"/>
</dbReference>
<dbReference type="STRING" id="9913.ENSBTAP00000000963"/>
<dbReference type="PaxDb" id="9913-ENSBTAP00000000963"/>
<dbReference type="GeneID" id="518738"/>
<dbReference type="KEGG" id="bta:518738"/>
<dbReference type="CTD" id="55094"/>
<dbReference type="eggNOG" id="KOG2138">
    <property type="taxonomic scope" value="Eukaryota"/>
</dbReference>
<dbReference type="InParanoid" id="Q24K12"/>
<dbReference type="OrthoDB" id="20507at2759"/>
<dbReference type="Proteomes" id="UP000009136">
    <property type="component" value="Unplaced"/>
</dbReference>
<dbReference type="GO" id="GO:0005634">
    <property type="term" value="C:nucleus"/>
    <property type="evidence" value="ECO:0000318"/>
    <property type="project" value="GO_Central"/>
</dbReference>
<dbReference type="GO" id="GO:0003723">
    <property type="term" value="F:RNA binding"/>
    <property type="evidence" value="ECO:0000318"/>
    <property type="project" value="GO_Central"/>
</dbReference>
<dbReference type="GO" id="GO:0006397">
    <property type="term" value="P:mRNA processing"/>
    <property type="evidence" value="ECO:0007669"/>
    <property type="project" value="InterPro"/>
</dbReference>
<dbReference type="InterPro" id="IPR011666">
    <property type="entry name" value="DUF1604"/>
</dbReference>
<dbReference type="InterPro" id="IPR000467">
    <property type="entry name" value="G_patch_dom"/>
</dbReference>
<dbReference type="PANTHER" id="PTHR13384">
    <property type="entry name" value="G PATCH DOMAIN-CONTAINING PROTEIN 1"/>
    <property type="match status" value="1"/>
</dbReference>
<dbReference type="PANTHER" id="PTHR13384:SF19">
    <property type="entry name" value="G PATCH DOMAIN-CONTAINING PROTEIN 1"/>
    <property type="match status" value="1"/>
</dbReference>
<dbReference type="Pfam" id="PF07713">
    <property type="entry name" value="DUF1604"/>
    <property type="match status" value="1"/>
</dbReference>
<dbReference type="Pfam" id="PF01585">
    <property type="entry name" value="G-patch"/>
    <property type="match status" value="1"/>
</dbReference>
<dbReference type="PROSITE" id="PS50174">
    <property type="entry name" value="G_PATCH"/>
    <property type="match status" value="1"/>
</dbReference>
<organism>
    <name type="scientific">Bos taurus</name>
    <name type="common">Bovine</name>
    <dbReference type="NCBI Taxonomy" id="9913"/>
    <lineage>
        <taxon>Eukaryota</taxon>
        <taxon>Metazoa</taxon>
        <taxon>Chordata</taxon>
        <taxon>Craniata</taxon>
        <taxon>Vertebrata</taxon>
        <taxon>Euteleostomi</taxon>
        <taxon>Mammalia</taxon>
        <taxon>Eutheria</taxon>
        <taxon>Laurasiatheria</taxon>
        <taxon>Artiodactyla</taxon>
        <taxon>Ruminantia</taxon>
        <taxon>Pecora</taxon>
        <taxon>Bovidae</taxon>
        <taxon>Bovinae</taxon>
        <taxon>Bos</taxon>
    </lineage>
</organism>
<reference key="1">
    <citation type="submission" date="2006-02" db="EMBL/GenBank/DDBJ databases">
        <authorList>
            <consortium name="NIH - Mammalian Gene Collection (MGC) project"/>
        </authorList>
    </citation>
    <scope>NUCLEOTIDE SEQUENCE [LARGE SCALE MRNA]</scope>
    <source>
        <strain>Hereford</strain>
        <tissue>Hypothalamus</tissue>
    </source>
</reference>
<reference key="2">
    <citation type="journal article" date="2005" name="BMC Genomics">
        <title>Characterization of 954 bovine full-CDS cDNA sequences.</title>
        <authorList>
            <person name="Harhay G.P."/>
            <person name="Sonstegard T.S."/>
            <person name="Keele J.W."/>
            <person name="Heaton M.P."/>
            <person name="Clawson M.L."/>
            <person name="Snelling W.M."/>
            <person name="Wiedmann R.T."/>
            <person name="Van Tassell C.P."/>
            <person name="Smith T.P.L."/>
        </authorList>
    </citation>
    <scope>NUCLEOTIDE SEQUENCE [LARGE SCALE MRNA] OF 4-672</scope>
</reference>
<keyword id="KW-0007">Acetylation</keyword>
<keyword id="KW-1017">Isopeptide bond</keyword>
<keyword id="KW-0597">Phosphoprotein</keyword>
<keyword id="KW-1185">Reference proteome</keyword>
<keyword id="KW-0832">Ubl conjugation</keyword>
<feature type="initiator methionine" description="Removed" evidence="1">
    <location>
        <position position="1"/>
    </location>
</feature>
<feature type="chain" id="PRO_0000287456" description="G patch domain-containing protein 1">
    <location>
        <begin position="2"/>
        <end position="931"/>
    </location>
</feature>
<feature type="domain" description="G-patch" evidence="2">
    <location>
        <begin position="152"/>
        <end position="198"/>
    </location>
</feature>
<feature type="region of interest" description="Disordered" evidence="3">
    <location>
        <begin position="1"/>
        <end position="41"/>
    </location>
</feature>
<feature type="region of interest" description="Disordered" evidence="3">
    <location>
        <begin position="72"/>
        <end position="92"/>
    </location>
</feature>
<feature type="region of interest" description="Disordered" evidence="3">
    <location>
        <begin position="169"/>
        <end position="213"/>
    </location>
</feature>
<feature type="region of interest" description="Disordered" evidence="3">
    <location>
        <begin position="567"/>
        <end position="594"/>
    </location>
</feature>
<feature type="region of interest" description="Disordered" evidence="3">
    <location>
        <begin position="659"/>
        <end position="931"/>
    </location>
</feature>
<feature type="compositionally biased region" description="Acidic residues" evidence="3">
    <location>
        <begin position="1"/>
        <end position="12"/>
    </location>
</feature>
<feature type="compositionally biased region" description="Polar residues" evidence="3">
    <location>
        <begin position="72"/>
        <end position="81"/>
    </location>
</feature>
<feature type="compositionally biased region" description="Acidic residues" evidence="3">
    <location>
        <begin position="202"/>
        <end position="211"/>
    </location>
</feature>
<feature type="compositionally biased region" description="Basic and acidic residues" evidence="3">
    <location>
        <begin position="582"/>
        <end position="593"/>
    </location>
</feature>
<feature type="compositionally biased region" description="Polar residues" evidence="3">
    <location>
        <begin position="659"/>
        <end position="668"/>
    </location>
</feature>
<feature type="compositionally biased region" description="Basic and acidic residues" evidence="3">
    <location>
        <begin position="669"/>
        <end position="695"/>
    </location>
</feature>
<feature type="compositionally biased region" description="Acidic residues" evidence="3">
    <location>
        <begin position="769"/>
        <end position="780"/>
    </location>
</feature>
<feature type="compositionally biased region" description="Basic and acidic residues" evidence="3">
    <location>
        <begin position="781"/>
        <end position="792"/>
    </location>
</feature>
<feature type="compositionally biased region" description="Basic residues" evidence="3">
    <location>
        <begin position="852"/>
        <end position="888"/>
    </location>
</feature>
<feature type="compositionally biased region" description="Low complexity" evidence="3">
    <location>
        <begin position="896"/>
        <end position="905"/>
    </location>
</feature>
<feature type="compositionally biased region" description="Basic residues" evidence="3">
    <location>
        <begin position="922"/>
        <end position="931"/>
    </location>
</feature>
<feature type="modified residue" description="N-acetylalanine" evidence="1">
    <location>
        <position position="2"/>
    </location>
</feature>
<feature type="modified residue" description="Phosphoserine" evidence="1">
    <location>
        <position position="6"/>
    </location>
</feature>
<feature type="modified residue" description="Phosphoserine" evidence="1">
    <location>
        <position position="8"/>
    </location>
</feature>
<feature type="modified residue" description="Phosphoserine" evidence="1">
    <location>
        <position position="358"/>
    </location>
</feature>
<feature type="modified residue" description="Phosphoserine" evidence="1">
    <location>
        <position position="479"/>
    </location>
</feature>
<feature type="modified residue" description="Phosphoserine" evidence="1">
    <location>
        <position position="715"/>
    </location>
</feature>
<feature type="cross-link" description="Glycyl lysine isopeptide (Lys-Gly) (interchain with G-Cter in SUMO2)" evidence="1">
    <location>
        <position position="313"/>
    </location>
</feature>
<feature type="sequence conflict" description="In Ref. 2; ABG67052." evidence="4" ref="2">
    <original>Q</original>
    <variation>R</variation>
    <location>
        <position position="413"/>
    </location>
</feature>
<gene>
    <name type="primary">GPATCH1</name>
    <name type="synonym">GPATC1</name>
</gene>
<proteinExistence type="evidence at transcript level"/>
<accession>Q24K12</accession>
<accession>Q0V8K5</accession>